<feature type="chain" id="PRO_0000330518" description="Siroheme synthase 1">
    <location>
        <begin position="1"/>
        <end position="471"/>
    </location>
</feature>
<feature type="region of interest" description="Precorrin-2 dehydrogenase /sirohydrochlorin ferrochelatase" evidence="1">
    <location>
        <begin position="1"/>
        <end position="203"/>
    </location>
</feature>
<feature type="region of interest" description="Uroporphyrinogen-III C-methyltransferase" evidence="1">
    <location>
        <begin position="215"/>
        <end position="471"/>
    </location>
</feature>
<feature type="active site" description="Proton acceptor" evidence="1">
    <location>
        <position position="247"/>
    </location>
</feature>
<feature type="active site" description="Proton donor" evidence="1">
    <location>
        <position position="269"/>
    </location>
</feature>
<feature type="binding site" evidence="1">
    <location>
        <begin position="22"/>
        <end position="23"/>
    </location>
    <ligand>
        <name>NAD(+)</name>
        <dbReference type="ChEBI" id="CHEBI:57540"/>
    </ligand>
</feature>
<feature type="binding site" evidence="1">
    <location>
        <begin position="43"/>
        <end position="44"/>
    </location>
    <ligand>
        <name>NAD(+)</name>
        <dbReference type="ChEBI" id="CHEBI:57540"/>
    </ligand>
</feature>
<feature type="binding site" evidence="1">
    <location>
        <position position="224"/>
    </location>
    <ligand>
        <name>S-adenosyl-L-methionine</name>
        <dbReference type="ChEBI" id="CHEBI:59789"/>
    </ligand>
</feature>
<feature type="binding site" evidence="1">
    <location>
        <begin position="300"/>
        <end position="302"/>
    </location>
    <ligand>
        <name>S-adenosyl-L-methionine</name>
        <dbReference type="ChEBI" id="CHEBI:59789"/>
    </ligand>
</feature>
<feature type="binding site" evidence="1">
    <location>
        <position position="305"/>
    </location>
    <ligand>
        <name>S-adenosyl-L-methionine</name>
        <dbReference type="ChEBI" id="CHEBI:59789"/>
    </ligand>
</feature>
<feature type="binding site" evidence="1">
    <location>
        <begin position="330"/>
        <end position="331"/>
    </location>
    <ligand>
        <name>S-adenosyl-L-methionine</name>
        <dbReference type="ChEBI" id="CHEBI:59789"/>
    </ligand>
</feature>
<feature type="binding site" evidence="1">
    <location>
        <position position="382"/>
    </location>
    <ligand>
        <name>S-adenosyl-L-methionine</name>
        <dbReference type="ChEBI" id="CHEBI:59789"/>
    </ligand>
</feature>
<feature type="binding site" evidence="1">
    <location>
        <position position="411"/>
    </location>
    <ligand>
        <name>S-adenosyl-L-methionine</name>
        <dbReference type="ChEBI" id="CHEBI:59789"/>
    </ligand>
</feature>
<feature type="modified residue" description="Phosphoserine" evidence="1">
    <location>
        <position position="128"/>
    </location>
</feature>
<accession>A6TD45</accession>
<proteinExistence type="inferred from homology"/>
<comment type="function">
    <text evidence="1">Multifunctional enzyme that catalyzes the SAM-dependent methylations of uroporphyrinogen III at position C-2 and C-7 to form precorrin-2 via precorrin-1. Then it catalyzes the NAD-dependent ring dehydrogenation of precorrin-2 to yield sirohydrochlorin. Finally, it catalyzes the ferrochelation of sirohydrochlorin to yield siroheme.</text>
</comment>
<comment type="catalytic activity">
    <reaction evidence="1">
        <text>uroporphyrinogen III + 2 S-adenosyl-L-methionine = precorrin-2 + 2 S-adenosyl-L-homocysteine + H(+)</text>
        <dbReference type="Rhea" id="RHEA:32459"/>
        <dbReference type="ChEBI" id="CHEBI:15378"/>
        <dbReference type="ChEBI" id="CHEBI:57308"/>
        <dbReference type="ChEBI" id="CHEBI:57856"/>
        <dbReference type="ChEBI" id="CHEBI:58827"/>
        <dbReference type="ChEBI" id="CHEBI:59789"/>
        <dbReference type="EC" id="2.1.1.107"/>
    </reaction>
</comment>
<comment type="catalytic activity">
    <reaction evidence="1">
        <text>precorrin-2 + NAD(+) = sirohydrochlorin + NADH + 2 H(+)</text>
        <dbReference type="Rhea" id="RHEA:15613"/>
        <dbReference type="ChEBI" id="CHEBI:15378"/>
        <dbReference type="ChEBI" id="CHEBI:57540"/>
        <dbReference type="ChEBI" id="CHEBI:57945"/>
        <dbReference type="ChEBI" id="CHEBI:58351"/>
        <dbReference type="ChEBI" id="CHEBI:58827"/>
        <dbReference type="EC" id="1.3.1.76"/>
    </reaction>
</comment>
<comment type="catalytic activity">
    <reaction evidence="1">
        <text>siroheme + 2 H(+) = sirohydrochlorin + Fe(2+)</text>
        <dbReference type="Rhea" id="RHEA:24360"/>
        <dbReference type="ChEBI" id="CHEBI:15378"/>
        <dbReference type="ChEBI" id="CHEBI:29033"/>
        <dbReference type="ChEBI" id="CHEBI:58351"/>
        <dbReference type="ChEBI" id="CHEBI:60052"/>
        <dbReference type="EC" id="4.99.1.4"/>
    </reaction>
</comment>
<comment type="pathway">
    <text evidence="1">Cofactor biosynthesis; adenosylcobalamin biosynthesis; precorrin-2 from uroporphyrinogen III: step 1/1.</text>
</comment>
<comment type="pathway">
    <text evidence="1">Cofactor biosynthesis; adenosylcobalamin biosynthesis; sirohydrochlorin from precorrin-2: step 1/1.</text>
</comment>
<comment type="pathway">
    <text evidence="1">Porphyrin-containing compound metabolism; siroheme biosynthesis; precorrin-2 from uroporphyrinogen III: step 1/1.</text>
</comment>
<comment type="pathway">
    <text evidence="1">Porphyrin-containing compound metabolism; siroheme biosynthesis; siroheme from sirohydrochlorin: step 1/1.</text>
</comment>
<comment type="pathway">
    <text evidence="1">Porphyrin-containing compound metabolism; siroheme biosynthesis; sirohydrochlorin from precorrin-2: step 1/1.</text>
</comment>
<comment type="similarity">
    <text evidence="1">In the N-terminal section; belongs to the precorrin-2 dehydrogenase / sirohydrochlorin ferrochelatase family.</text>
</comment>
<comment type="similarity">
    <text evidence="1">In the C-terminal section; belongs to the precorrin methyltransferase family.</text>
</comment>
<comment type="sequence caution" evidence="2">
    <conflict type="erroneous initiation">
        <sequence resource="EMBL-CDS" id="ABR78516"/>
    </conflict>
    <text>Truncated N-terminus.</text>
</comment>
<dbReference type="EC" id="2.1.1.107" evidence="1"/>
<dbReference type="EC" id="1.3.1.76" evidence="1"/>
<dbReference type="EC" id="4.99.1.4" evidence="1"/>
<dbReference type="EMBL" id="CP000647">
    <property type="protein sequence ID" value="ABR78516.1"/>
    <property type="status" value="ALT_INIT"/>
    <property type="molecule type" value="Genomic_DNA"/>
</dbReference>
<dbReference type="SMR" id="A6TD45"/>
<dbReference type="STRING" id="272620.KPN_03115"/>
<dbReference type="PaxDb" id="272620-KPN_03115"/>
<dbReference type="EnsemblBacteria" id="ABR78516">
    <property type="protein sequence ID" value="ABR78516"/>
    <property type="gene ID" value="KPN_03115"/>
</dbReference>
<dbReference type="KEGG" id="kpn:KPN_03115"/>
<dbReference type="HOGENOM" id="CLU_011276_2_0_6"/>
<dbReference type="UniPathway" id="UPA00148">
    <property type="reaction ID" value="UER00211"/>
</dbReference>
<dbReference type="UniPathway" id="UPA00148">
    <property type="reaction ID" value="UER00222"/>
</dbReference>
<dbReference type="UniPathway" id="UPA00262">
    <property type="reaction ID" value="UER00211"/>
</dbReference>
<dbReference type="UniPathway" id="UPA00262">
    <property type="reaction ID" value="UER00222"/>
</dbReference>
<dbReference type="UniPathway" id="UPA00262">
    <property type="reaction ID" value="UER00376"/>
</dbReference>
<dbReference type="Proteomes" id="UP000000265">
    <property type="component" value="Chromosome"/>
</dbReference>
<dbReference type="GO" id="GO:0051287">
    <property type="term" value="F:NAD binding"/>
    <property type="evidence" value="ECO:0007669"/>
    <property type="project" value="InterPro"/>
</dbReference>
<dbReference type="GO" id="GO:0043115">
    <property type="term" value="F:precorrin-2 dehydrogenase activity"/>
    <property type="evidence" value="ECO:0007669"/>
    <property type="project" value="UniProtKB-UniRule"/>
</dbReference>
<dbReference type="GO" id="GO:0051266">
    <property type="term" value="F:sirohydrochlorin ferrochelatase activity"/>
    <property type="evidence" value="ECO:0007669"/>
    <property type="project" value="UniProtKB-EC"/>
</dbReference>
<dbReference type="GO" id="GO:0004851">
    <property type="term" value="F:uroporphyrin-III C-methyltransferase activity"/>
    <property type="evidence" value="ECO:0007669"/>
    <property type="project" value="UniProtKB-UniRule"/>
</dbReference>
<dbReference type="GO" id="GO:0009236">
    <property type="term" value="P:cobalamin biosynthetic process"/>
    <property type="evidence" value="ECO:0007669"/>
    <property type="project" value="UniProtKB-UniRule"/>
</dbReference>
<dbReference type="GO" id="GO:0032259">
    <property type="term" value="P:methylation"/>
    <property type="evidence" value="ECO:0007669"/>
    <property type="project" value="UniProtKB-KW"/>
</dbReference>
<dbReference type="GO" id="GO:0019354">
    <property type="term" value="P:siroheme biosynthetic process"/>
    <property type="evidence" value="ECO:0007669"/>
    <property type="project" value="UniProtKB-UniRule"/>
</dbReference>
<dbReference type="CDD" id="cd11642">
    <property type="entry name" value="SUMT"/>
    <property type="match status" value="1"/>
</dbReference>
<dbReference type="FunFam" id="3.30.160.110:FF:000001">
    <property type="entry name" value="Siroheme synthase"/>
    <property type="match status" value="1"/>
</dbReference>
<dbReference type="FunFam" id="3.30.950.10:FF:000001">
    <property type="entry name" value="Siroheme synthase"/>
    <property type="match status" value="1"/>
</dbReference>
<dbReference type="FunFam" id="3.40.1010.10:FF:000001">
    <property type="entry name" value="Siroheme synthase"/>
    <property type="match status" value="1"/>
</dbReference>
<dbReference type="Gene3D" id="3.40.1010.10">
    <property type="entry name" value="Cobalt-precorrin-4 Transmethylase, Domain 1"/>
    <property type="match status" value="1"/>
</dbReference>
<dbReference type="Gene3D" id="3.30.950.10">
    <property type="entry name" value="Methyltransferase, Cobalt-precorrin-4 Transmethylase, Domain 2"/>
    <property type="match status" value="1"/>
</dbReference>
<dbReference type="Gene3D" id="3.40.50.720">
    <property type="entry name" value="NAD(P)-binding Rossmann-like Domain"/>
    <property type="match status" value="1"/>
</dbReference>
<dbReference type="Gene3D" id="1.10.8.210">
    <property type="entry name" value="Sirohaem synthase, dimerisation domain"/>
    <property type="match status" value="1"/>
</dbReference>
<dbReference type="Gene3D" id="3.30.160.110">
    <property type="entry name" value="Siroheme synthase, domain 2"/>
    <property type="match status" value="1"/>
</dbReference>
<dbReference type="HAMAP" id="MF_01646">
    <property type="entry name" value="Siroheme_synth"/>
    <property type="match status" value="1"/>
</dbReference>
<dbReference type="InterPro" id="IPR000878">
    <property type="entry name" value="4pyrrol_Mease"/>
</dbReference>
<dbReference type="InterPro" id="IPR035996">
    <property type="entry name" value="4pyrrol_Methylase_sf"/>
</dbReference>
<dbReference type="InterPro" id="IPR014777">
    <property type="entry name" value="4pyrrole_Mease_sub1"/>
</dbReference>
<dbReference type="InterPro" id="IPR014776">
    <property type="entry name" value="4pyrrole_Mease_sub2"/>
</dbReference>
<dbReference type="InterPro" id="IPR006366">
    <property type="entry name" value="CobA/CysG_C"/>
</dbReference>
<dbReference type="InterPro" id="IPR036291">
    <property type="entry name" value="NAD(P)-bd_dom_sf"/>
</dbReference>
<dbReference type="InterPro" id="IPR050161">
    <property type="entry name" value="Siro_Cobalamin_biosynth"/>
</dbReference>
<dbReference type="InterPro" id="IPR037115">
    <property type="entry name" value="Sirohaem_synt_dimer_dom_sf"/>
</dbReference>
<dbReference type="InterPro" id="IPR012409">
    <property type="entry name" value="Sirohaem_synth"/>
</dbReference>
<dbReference type="InterPro" id="IPR028281">
    <property type="entry name" value="Sirohaem_synthase_central"/>
</dbReference>
<dbReference type="InterPro" id="IPR019478">
    <property type="entry name" value="Sirohaem_synthase_dimer_dom"/>
</dbReference>
<dbReference type="InterPro" id="IPR006367">
    <property type="entry name" value="Sirohaem_synthase_N"/>
</dbReference>
<dbReference type="InterPro" id="IPR003043">
    <property type="entry name" value="Uropor_MeTrfase_CS"/>
</dbReference>
<dbReference type="NCBIfam" id="TIGR01469">
    <property type="entry name" value="cobA_cysG_Cterm"/>
    <property type="match status" value="1"/>
</dbReference>
<dbReference type="NCBIfam" id="TIGR01470">
    <property type="entry name" value="cysG_Nterm"/>
    <property type="match status" value="1"/>
</dbReference>
<dbReference type="NCBIfam" id="NF004790">
    <property type="entry name" value="PRK06136.1"/>
    <property type="match status" value="1"/>
</dbReference>
<dbReference type="NCBIfam" id="NF007922">
    <property type="entry name" value="PRK10637.1"/>
    <property type="match status" value="1"/>
</dbReference>
<dbReference type="PANTHER" id="PTHR45790:SF1">
    <property type="entry name" value="SIROHEME SYNTHASE"/>
    <property type="match status" value="1"/>
</dbReference>
<dbReference type="PANTHER" id="PTHR45790">
    <property type="entry name" value="SIROHEME SYNTHASE-RELATED"/>
    <property type="match status" value="1"/>
</dbReference>
<dbReference type="Pfam" id="PF10414">
    <property type="entry name" value="CysG_dimeriser"/>
    <property type="match status" value="1"/>
</dbReference>
<dbReference type="Pfam" id="PF13241">
    <property type="entry name" value="NAD_binding_7"/>
    <property type="match status" value="1"/>
</dbReference>
<dbReference type="Pfam" id="PF14824">
    <property type="entry name" value="Sirohm_synth_M"/>
    <property type="match status" value="1"/>
</dbReference>
<dbReference type="Pfam" id="PF00590">
    <property type="entry name" value="TP_methylase"/>
    <property type="match status" value="1"/>
</dbReference>
<dbReference type="PIRSF" id="PIRSF036426">
    <property type="entry name" value="Sirohaem_synth"/>
    <property type="match status" value="1"/>
</dbReference>
<dbReference type="SUPFAM" id="SSF51735">
    <property type="entry name" value="NAD(P)-binding Rossmann-fold domains"/>
    <property type="match status" value="1"/>
</dbReference>
<dbReference type="SUPFAM" id="SSF75615">
    <property type="entry name" value="Siroheme synthase middle domains-like"/>
    <property type="match status" value="1"/>
</dbReference>
<dbReference type="SUPFAM" id="SSF53790">
    <property type="entry name" value="Tetrapyrrole methylase"/>
    <property type="match status" value="1"/>
</dbReference>
<dbReference type="PROSITE" id="PS00839">
    <property type="entry name" value="SUMT_1"/>
    <property type="match status" value="1"/>
</dbReference>
<dbReference type="PROSITE" id="PS00840">
    <property type="entry name" value="SUMT_2"/>
    <property type="match status" value="1"/>
</dbReference>
<protein>
    <recommendedName>
        <fullName evidence="1">Siroheme synthase 1</fullName>
    </recommendedName>
    <domain>
        <recommendedName>
            <fullName evidence="1">Uroporphyrinogen-III C-methyltransferase 1</fullName>
            <shortName evidence="1">Urogen III methylase 1</shortName>
            <ecNumber evidence="1">2.1.1.107</ecNumber>
        </recommendedName>
        <alternativeName>
            <fullName evidence="1">SUMT 1</fullName>
        </alternativeName>
        <alternativeName>
            <fullName evidence="1">Uroporphyrinogen III methylase 1</fullName>
            <shortName evidence="1">UROM 1</shortName>
        </alternativeName>
    </domain>
    <domain>
        <recommendedName>
            <fullName evidence="1">Precorrin-2 dehydrogenase 1</fullName>
            <ecNumber evidence="1">1.3.1.76</ecNumber>
        </recommendedName>
    </domain>
    <domain>
        <recommendedName>
            <fullName evidence="1">Sirohydrochlorin ferrochelatase 1</fullName>
            <ecNumber evidence="1">4.99.1.4</ecNumber>
        </recommendedName>
    </domain>
</protein>
<name>CYSG1_KLEP7</name>
<sequence>MDYLPLFAELKQRPVLVIGGGEIAERKIKFLLRAQAQVQVVAETLSPALADLAARQALSWRATEFSDSLVDDVFLVIAATEDDALNQRVFAAANARYRLVNVVDNQALCSFVFPSIVDRSPLLVAISSSGKAPVLSRILREKIEALLPTNLGRLAESASYWRNHLKTRLTTTEARRRFWERVFTGRFASLMVAGNSAEAEKALQDELDKPERETGEIILVGAGPGDAGLLTLRGLQAIQQADVVFHDHLVTQPVLELVRRDAELICVGKRAGEHSVPQHETNQLLVEAAKAGKTVVRLKGGDPFIFGRGAEELQAAAEAGIPFQVVPGVTAAAGATAYAGIPLTHRDYAQSAVFVTGHYKPDSAPFDWSLLAKSQQTLAIYMGTMKAAEISAQLIAHGRDSDTPVAVISRGTRDDQQTITGTLQQLEHLAKDAPMPALLVVGEVVQLHQQLAWFQHTSSAEGFNASVVNLA</sequence>
<keyword id="KW-0169">Cobalamin biosynthesis</keyword>
<keyword id="KW-0456">Lyase</keyword>
<keyword id="KW-0489">Methyltransferase</keyword>
<keyword id="KW-0511">Multifunctional enzyme</keyword>
<keyword id="KW-0520">NAD</keyword>
<keyword id="KW-0560">Oxidoreductase</keyword>
<keyword id="KW-0597">Phosphoprotein</keyword>
<keyword id="KW-0627">Porphyrin biosynthesis</keyword>
<keyword id="KW-0949">S-adenosyl-L-methionine</keyword>
<keyword id="KW-0808">Transferase</keyword>
<organism>
    <name type="scientific">Klebsiella pneumoniae subsp. pneumoniae (strain ATCC 700721 / MGH 78578)</name>
    <dbReference type="NCBI Taxonomy" id="272620"/>
    <lineage>
        <taxon>Bacteria</taxon>
        <taxon>Pseudomonadati</taxon>
        <taxon>Pseudomonadota</taxon>
        <taxon>Gammaproteobacteria</taxon>
        <taxon>Enterobacterales</taxon>
        <taxon>Enterobacteriaceae</taxon>
        <taxon>Klebsiella/Raoultella group</taxon>
        <taxon>Klebsiella</taxon>
        <taxon>Klebsiella pneumoniae complex</taxon>
    </lineage>
</organism>
<gene>
    <name evidence="1" type="primary">cysG1</name>
    <name type="ordered locus">KPN78578_30550</name>
    <name type="ORF">KPN_03115</name>
</gene>
<reference key="1">
    <citation type="submission" date="2006-09" db="EMBL/GenBank/DDBJ databases">
        <authorList>
            <consortium name="The Klebsiella pneumonia Genome Sequencing Project"/>
            <person name="McClelland M."/>
            <person name="Sanderson E.K."/>
            <person name="Spieth J."/>
            <person name="Clifton W.S."/>
            <person name="Latreille P."/>
            <person name="Sabo A."/>
            <person name="Pepin K."/>
            <person name="Bhonagiri V."/>
            <person name="Porwollik S."/>
            <person name="Ali J."/>
            <person name="Wilson R.K."/>
        </authorList>
    </citation>
    <scope>NUCLEOTIDE SEQUENCE [LARGE SCALE GENOMIC DNA]</scope>
    <source>
        <strain>ATCC 700721 / MGH 78578</strain>
    </source>
</reference>
<evidence type="ECO:0000255" key="1">
    <source>
        <dbReference type="HAMAP-Rule" id="MF_01646"/>
    </source>
</evidence>
<evidence type="ECO:0000305" key="2"/>